<name>TIAM2_HUMAN</name>
<protein>
    <recommendedName>
        <fullName evidence="19">Rho guanine nucleotide exchange factor TIAM2</fullName>
    </recommendedName>
    <alternativeName>
        <fullName>SIF and TIAM1-like exchange factor</fullName>
    </alternativeName>
    <alternativeName>
        <fullName>T-lymphoma invasion and metastasis-inducing protein 2</fullName>
        <shortName>TIAM-2</shortName>
    </alternativeName>
</protein>
<gene>
    <name type="primary">TIAM2</name>
    <name type="synonym">KIAA2016</name>
    <name type="synonym">STEF</name>
</gene>
<dbReference type="EMBL" id="AF120323">
    <property type="protein sequence ID" value="AAF05900.1"/>
    <property type="status" value="ALT_INIT"/>
    <property type="molecule type" value="mRNA"/>
</dbReference>
<dbReference type="EMBL" id="AF120324">
    <property type="protein sequence ID" value="AAF05901.1"/>
    <property type="molecule type" value="mRNA"/>
</dbReference>
<dbReference type="EMBL" id="AB095936">
    <property type="protein sequence ID" value="BAC23112.2"/>
    <property type="status" value="ALT_INIT"/>
    <property type="molecule type" value="mRNA"/>
</dbReference>
<dbReference type="EMBL" id="AL122086">
    <property type="protein sequence ID" value="CAB59259.2"/>
    <property type="molecule type" value="mRNA"/>
</dbReference>
<dbReference type="EMBL" id="AL139101">
    <property type="status" value="NOT_ANNOTATED_CDS"/>
    <property type="molecule type" value="Genomic_DNA"/>
</dbReference>
<dbReference type="EMBL" id="AL355343">
    <property type="status" value="NOT_ANNOTATED_CDS"/>
    <property type="molecule type" value="Genomic_DNA"/>
</dbReference>
<dbReference type="EMBL" id="AL596202">
    <property type="status" value="NOT_ANNOTATED_CDS"/>
    <property type="molecule type" value="Genomic_DNA"/>
</dbReference>
<dbReference type="EMBL" id="CH471051">
    <property type="protein sequence ID" value="EAW47693.1"/>
    <property type="molecule type" value="Genomic_DNA"/>
</dbReference>
<dbReference type="EMBL" id="BC066979">
    <property type="protein sequence ID" value="AAH66979.1"/>
    <property type="molecule type" value="mRNA"/>
</dbReference>
<dbReference type="EMBL" id="BC137275">
    <property type="protein sequence ID" value="AAI37276.1"/>
    <property type="molecule type" value="mRNA"/>
</dbReference>
<dbReference type="EMBL" id="AK125459">
    <property type="protein sequence ID" value="BAC86170.1"/>
    <property type="status" value="ALT_INIT"/>
    <property type="molecule type" value="mRNA"/>
</dbReference>
<dbReference type="CCDS" id="CCDS34558.1">
    <molecule id="Q8IVF5-1"/>
</dbReference>
<dbReference type="CCDS" id="CCDS34559.1">
    <molecule id="Q8IVF5-3"/>
</dbReference>
<dbReference type="RefSeq" id="NP_001010927.2">
    <molecule id="Q8IVF5-3"/>
    <property type="nucleotide sequence ID" value="NM_001010927.3"/>
</dbReference>
<dbReference type="RefSeq" id="NP_001371475.1">
    <molecule id="Q8IVF5-1"/>
    <property type="nucleotide sequence ID" value="NM_001384546.1"/>
</dbReference>
<dbReference type="RefSeq" id="NP_001371476.1">
    <molecule id="Q8IVF5-1"/>
    <property type="nucleotide sequence ID" value="NM_001384547.1"/>
</dbReference>
<dbReference type="RefSeq" id="NP_036586.2">
    <molecule id="Q8IVF5-1"/>
    <property type="nucleotide sequence ID" value="NM_012454.3"/>
</dbReference>
<dbReference type="SMR" id="Q8IVF5"/>
<dbReference type="BioGRID" id="117621">
    <property type="interactions" value="15"/>
</dbReference>
<dbReference type="FunCoup" id="Q8IVF5">
    <property type="interactions" value="492"/>
</dbReference>
<dbReference type="IntAct" id="Q8IVF5">
    <property type="interactions" value="9"/>
</dbReference>
<dbReference type="MINT" id="Q8IVF5"/>
<dbReference type="STRING" id="9606.ENSP00000437188"/>
<dbReference type="GlyGen" id="Q8IVF5">
    <property type="glycosylation" value="2 sites, 1 O-linked glycan (1 site)"/>
</dbReference>
<dbReference type="iPTMnet" id="Q8IVF5"/>
<dbReference type="PhosphoSitePlus" id="Q8IVF5"/>
<dbReference type="BioMuta" id="TIAM2"/>
<dbReference type="DMDM" id="296453025"/>
<dbReference type="jPOST" id="Q8IVF5"/>
<dbReference type="MassIVE" id="Q8IVF5"/>
<dbReference type="PaxDb" id="9606-ENSP00000437188"/>
<dbReference type="PeptideAtlas" id="Q8IVF5"/>
<dbReference type="ProteomicsDB" id="70693">
    <molecule id="Q8IVF5-1"/>
</dbReference>
<dbReference type="ProteomicsDB" id="70694">
    <molecule id="Q8IVF5-2"/>
</dbReference>
<dbReference type="ProteomicsDB" id="70695">
    <molecule id="Q8IVF5-3"/>
</dbReference>
<dbReference type="ProteomicsDB" id="70696">
    <molecule id="Q8IVF5-4"/>
</dbReference>
<dbReference type="ProteomicsDB" id="70697">
    <molecule id="Q8IVF5-5"/>
</dbReference>
<dbReference type="Antibodypedia" id="2773">
    <property type="antibodies" value="177 antibodies from 24 providers"/>
</dbReference>
<dbReference type="DNASU" id="26230"/>
<dbReference type="Ensembl" id="ENST00000275246.11">
    <molecule id="Q8IVF5-3"/>
    <property type="protein sequence ID" value="ENSP00000275246.7"/>
    <property type="gene ID" value="ENSG00000146426.19"/>
</dbReference>
<dbReference type="Ensembl" id="ENST00000360366.8">
    <molecule id="Q8IVF5-5"/>
    <property type="protein sequence ID" value="ENSP00000353528.4"/>
    <property type="gene ID" value="ENSG00000146426.19"/>
</dbReference>
<dbReference type="Ensembl" id="ENST00000456877.6">
    <molecule id="Q8IVF5-4"/>
    <property type="protein sequence ID" value="ENSP00000407183.2"/>
    <property type="gene ID" value="ENSG00000146426.19"/>
</dbReference>
<dbReference type="Ensembl" id="ENST00000461783.7">
    <molecule id="Q8IVF5-1"/>
    <property type="protein sequence ID" value="ENSP00000437188.2"/>
    <property type="gene ID" value="ENSG00000146426.19"/>
</dbReference>
<dbReference type="Ensembl" id="ENST00000529824.6">
    <molecule id="Q8IVF5-2"/>
    <property type="protein sequence ID" value="ENSP00000433348.2"/>
    <property type="gene ID" value="ENSG00000146426.19"/>
</dbReference>
<dbReference type="Ensembl" id="ENST00000682666.1">
    <molecule id="Q8IVF5-1"/>
    <property type="protein sequence ID" value="ENSP00000507157.1"/>
    <property type="gene ID" value="ENSG00000146426.19"/>
</dbReference>
<dbReference type="GeneID" id="26230"/>
<dbReference type="KEGG" id="hsa:26230"/>
<dbReference type="MANE-Select" id="ENST00000682666.1">
    <property type="protein sequence ID" value="ENSP00000507157.1"/>
    <property type="RefSeq nucleotide sequence ID" value="NM_012454.4"/>
    <property type="RefSeq protein sequence ID" value="NP_036586.3"/>
</dbReference>
<dbReference type="UCSC" id="uc003qqb.3">
    <molecule id="Q8IVF5-1"/>
    <property type="organism name" value="human"/>
</dbReference>
<dbReference type="AGR" id="HGNC:11806"/>
<dbReference type="CTD" id="26230"/>
<dbReference type="DisGeNET" id="26230"/>
<dbReference type="GeneCards" id="TIAM2"/>
<dbReference type="HGNC" id="HGNC:11806">
    <property type="gene designation" value="TIAM2"/>
</dbReference>
<dbReference type="HPA" id="ENSG00000146426">
    <property type="expression patterns" value="Tissue enhanced (brain, testis)"/>
</dbReference>
<dbReference type="MIM" id="604709">
    <property type="type" value="gene"/>
</dbReference>
<dbReference type="neXtProt" id="NX_Q8IVF5"/>
<dbReference type="OpenTargets" id="ENSG00000146426"/>
<dbReference type="PharmGKB" id="PA36515"/>
<dbReference type="VEuPathDB" id="HostDB:ENSG00000146426"/>
<dbReference type="eggNOG" id="KOG3519">
    <property type="taxonomic scope" value="Eukaryota"/>
</dbReference>
<dbReference type="GeneTree" id="ENSGT00940000157012"/>
<dbReference type="HOGENOM" id="CLU_000494_2_1_1"/>
<dbReference type="InParanoid" id="Q8IVF5"/>
<dbReference type="OMA" id="KSHQPYA"/>
<dbReference type="OrthoDB" id="8059989at2759"/>
<dbReference type="PAN-GO" id="Q8IVF5">
    <property type="GO annotations" value="5 GO annotations based on evolutionary models"/>
</dbReference>
<dbReference type="PhylomeDB" id="Q8IVF5"/>
<dbReference type="TreeFam" id="TF319686"/>
<dbReference type="PathwayCommons" id="Q8IVF5"/>
<dbReference type="Reactome" id="R-HSA-193648">
    <property type="pathway name" value="NRAGE signals death through JNK"/>
</dbReference>
<dbReference type="Reactome" id="R-HSA-1989781">
    <property type="pathway name" value="PPARA activates gene expression"/>
</dbReference>
<dbReference type="Reactome" id="R-HSA-416482">
    <property type="pathway name" value="G alpha (12/13) signalling events"/>
</dbReference>
<dbReference type="Reactome" id="R-HSA-9013149">
    <property type="pathway name" value="RAC1 GTPase cycle"/>
</dbReference>
<dbReference type="SignaLink" id="Q8IVF5"/>
<dbReference type="SIGNOR" id="Q8IVF5"/>
<dbReference type="BioGRID-ORCS" id="26230">
    <property type="hits" value="18 hits in 1148 CRISPR screens"/>
</dbReference>
<dbReference type="ChiTaRS" id="TIAM2">
    <property type="organism name" value="human"/>
</dbReference>
<dbReference type="GenomeRNAi" id="26230"/>
<dbReference type="Pharos" id="Q8IVF5">
    <property type="development level" value="Tbio"/>
</dbReference>
<dbReference type="PRO" id="PR:Q8IVF5"/>
<dbReference type="Proteomes" id="UP000005640">
    <property type="component" value="Chromosome 6"/>
</dbReference>
<dbReference type="RNAct" id="Q8IVF5">
    <property type="molecule type" value="protein"/>
</dbReference>
<dbReference type="Bgee" id="ENSG00000146426">
    <property type="expression patterns" value="Expressed in cortical plate and 169 other cell types or tissues"/>
</dbReference>
<dbReference type="ExpressionAtlas" id="Q8IVF5">
    <property type="expression patterns" value="baseline and differential"/>
</dbReference>
<dbReference type="GO" id="GO:0005829">
    <property type="term" value="C:cytosol"/>
    <property type="evidence" value="ECO:0000304"/>
    <property type="project" value="Reactome"/>
</dbReference>
<dbReference type="GO" id="GO:0070062">
    <property type="term" value="C:extracellular exosome"/>
    <property type="evidence" value="ECO:0007005"/>
    <property type="project" value="UniProtKB"/>
</dbReference>
<dbReference type="GO" id="GO:0030175">
    <property type="term" value="C:filopodium"/>
    <property type="evidence" value="ECO:0007669"/>
    <property type="project" value="UniProtKB-SubCell"/>
</dbReference>
<dbReference type="GO" id="GO:0030426">
    <property type="term" value="C:growth cone"/>
    <property type="evidence" value="ECO:0007669"/>
    <property type="project" value="UniProtKB-SubCell"/>
</dbReference>
<dbReference type="GO" id="GO:0030027">
    <property type="term" value="C:lamellipodium"/>
    <property type="evidence" value="ECO:0007669"/>
    <property type="project" value="UniProtKB-SubCell"/>
</dbReference>
<dbReference type="GO" id="GO:0016020">
    <property type="term" value="C:membrane"/>
    <property type="evidence" value="ECO:0000318"/>
    <property type="project" value="GO_Central"/>
</dbReference>
<dbReference type="GO" id="GO:0043204">
    <property type="term" value="C:perikaryon"/>
    <property type="evidence" value="ECO:0007669"/>
    <property type="project" value="UniProtKB-SubCell"/>
</dbReference>
<dbReference type="GO" id="GO:0045202">
    <property type="term" value="C:synapse"/>
    <property type="evidence" value="ECO:0000318"/>
    <property type="project" value="GO_Central"/>
</dbReference>
<dbReference type="GO" id="GO:0005096">
    <property type="term" value="F:GTPase activator activity"/>
    <property type="evidence" value="ECO:0007669"/>
    <property type="project" value="Ensembl"/>
</dbReference>
<dbReference type="GO" id="GO:0005085">
    <property type="term" value="F:guanyl-nucleotide exchange factor activity"/>
    <property type="evidence" value="ECO:0000318"/>
    <property type="project" value="GO_Central"/>
</dbReference>
<dbReference type="GO" id="GO:0050772">
    <property type="term" value="P:positive regulation of axonogenesis"/>
    <property type="evidence" value="ECO:0000318"/>
    <property type="project" value="GO_Central"/>
</dbReference>
<dbReference type="GO" id="GO:0051056">
    <property type="term" value="P:regulation of small GTPase mediated signal transduction"/>
    <property type="evidence" value="ECO:0000304"/>
    <property type="project" value="Reactome"/>
</dbReference>
<dbReference type="GO" id="GO:0007264">
    <property type="term" value="P:small GTPase-mediated signal transduction"/>
    <property type="evidence" value="ECO:0000318"/>
    <property type="project" value="GO_Central"/>
</dbReference>
<dbReference type="CDD" id="cd00136">
    <property type="entry name" value="PDZ_canonical"/>
    <property type="match status" value="1"/>
</dbReference>
<dbReference type="CDD" id="cd01230">
    <property type="entry name" value="PH1_Tiam1_2"/>
    <property type="match status" value="1"/>
</dbReference>
<dbReference type="CDD" id="cd01255">
    <property type="entry name" value="PH2_Tiam1_2"/>
    <property type="match status" value="1"/>
</dbReference>
<dbReference type="CDD" id="cd00160">
    <property type="entry name" value="RhoGEF"/>
    <property type="match status" value="1"/>
</dbReference>
<dbReference type="FunFam" id="1.20.900.10:FF:000012">
    <property type="entry name" value="T cell lymphoma invasion and metastasis 1"/>
    <property type="match status" value="1"/>
</dbReference>
<dbReference type="FunFam" id="2.30.29.30:FF:000065">
    <property type="entry name" value="T cell lymphoma invasion and metastasis 1"/>
    <property type="match status" value="1"/>
</dbReference>
<dbReference type="FunFam" id="2.30.29.30:FF:000121">
    <property type="entry name" value="T cell lymphoma invasion and metastasis 1"/>
    <property type="match status" value="1"/>
</dbReference>
<dbReference type="FunFam" id="2.30.42.10:FF:000128">
    <property type="entry name" value="T cell lymphoma invasion and metastasis 2"/>
    <property type="match status" value="1"/>
</dbReference>
<dbReference type="Gene3D" id="2.30.42.10">
    <property type="match status" value="1"/>
</dbReference>
<dbReference type="Gene3D" id="6.10.140.680">
    <property type="match status" value="1"/>
</dbReference>
<dbReference type="Gene3D" id="1.20.900.10">
    <property type="entry name" value="Dbl homology (DH) domain"/>
    <property type="match status" value="1"/>
</dbReference>
<dbReference type="Gene3D" id="2.30.29.30">
    <property type="entry name" value="Pleckstrin-homology domain (PH domain)/Phosphotyrosine-binding domain (PTB)"/>
    <property type="match status" value="2"/>
</dbReference>
<dbReference type="InterPro" id="IPR035899">
    <property type="entry name" value="DBL_dom_sf"/>
</dbReference>
<dbReference type="InterPro" id="IPR000219">
    <property type="entry name" value="DH_dom"/>
</dbReference>
<dbReference type="InterPro" id="IPR001331">
    <property type="entry name" value="GDS_CDC24_CS"/>
</dbReference>
<dbReference type="InterPro" id="IPR001478">
    <property type="entry name" value="PDZ"/>
</dbReference>
<dbReference type="InterPro" id="IPR036034">
    <property type="entry name" value="PDZ_sf"/>
</dbReference>
<dbReference type="InterPro" id="IPR011993">
    <property type="entry name" value="PH-like_dom_sf"/>
</dbReference>
<dbReference type="InterPro" id="IPR001849">
    <property type="entry name" value="PH_domain"/>
</dbReference>
<dbReference type="InterPro" id="IPR055230">
    <property type="entry name" value="PH_Tiam1/2"/>
</dbReference>
<dbReference type="InterPro" id="IPR003116">
    <property type="entry name" value="RBD_dom"/>
</dbReference>
<dbReference type="InterPro" id="IPR043537">
    <property type="entry name" value="Tiam1/Tiam2/Sif"/>
</dbReference>
<dbReference type="InterPro" id="IPR040655">
    <property type="entry name" value="TIAM1_CC-Ex"/>
</dbReference>
<dbReference type="PANTHER" id="PTHR46001:SF5">
    <property type="entry name" value="RHO GUANINE NUCLEOTIDE EXCHANGE FACTOR TIAM2"/>
    <property type="match status" value="1"/>
</dbReference>
<dbReference type="PANTHER" id="PTHR46001">
    <property type="entry name" value="TIAM (MAMMALIAN TUMOR INVASION AND METASTASIS FACTOR) HOMOLOG"/>
    <property type="match status" value="1"/>
</dbReference>
<dbReference type="Pfam" id="PF00595">
    <property type="entry name" value="PDZ"/>
    <property type="match status" value="1"/>
</dbReference>
<dbReference type="Pfam" id="PF00169">
    <property type="entry name" value="PH"/>
    <property type="match status" value="1"/>
</dbReference>
<dbReference type="Pfam" id="PF23014">
    <property type="entry name" value="PH_Tiam1"/>
    <property type="match status" value="1"/>
</dbReference>
<dbReference type="Pfam" id="PF00621">
    <property type="entry name" value="RhoGEF"/>
    <property type="match status" value="1"/>
</dbReference>
<dbReference type="Pfam" id="PF18385">
    <property type="entry name" value="Tiam_CC_Ex"/>
    <property type="match status" value="1"/>
</dbReference>
<dbReference type="SMART" id="SM00228">
    <property type="entry name" value="PDZ"/>
    <property type="match status" value="1"/>
</dbReference>
<dbReference type="SMART" id="SM00233">
    <property type="entry name" value="PH"/>
    <property type="match status" value="2"/>
</dbReference>
<dbReference type="SMART" id="SM00455">
    <property type="entry name" value="RBD"/>
    <property type="match status" value="1"/>
</dbReference>
<dbReference type="SMART" id="SM00325">
    <property type="entry name" value="RhoGEF"/>
    <property type="match status" value="1"/>
</dbReference>
<dbReference type="SUPFAM" id="SSF48065">
    <property type="entry name" value="DBL homology domain (DH-domain)"/>
    <property type="match status" value="1"/>
</dbReference>
<dbReference type="SUPFAM" id="SSF50156">
    <property type="entry name" value="PDZ domain-like"/>
    <property type="match status" value="1"/>
</dbReference>
<dbReference type="SUPFAM" id="SSF50729">
    <property type="entry name" value="PH domain-like"/>
    <property type="match status" value="2"/>
</dbReference>
<dbReference type="PROSITE" id="PS00741">
    <property type="entry name" value="DH_1"/>
    <property type="match status" value="1"/>
</dbReference>
<dbReference type="PROSITE" id="PS50010">
    <property type="entry name" value="DH_2"/>
    <property type="match status" value="1"/>
</dbReference>
<dbReference type="PROSITE" id="PS50106">
    <property type="entry name" value="PDZ"/>
    <property type="match status" value="1"/>
</dbReference>
<dbReference type="PROSITE" id="PS50003">
    <property type="entry name" value="PH_DOMAIN"/>
    <property type="match status" value="1"/>
</dbReference>
<dbReference type="PROSITE" id="PS50898">
    <property type="entry name" value="RBD"/>
    <property type="match status" value="1"/>
</dbReference>
<proteinExistence type="evidence at protein level"/>
<sequence length="1701" mass="190103">MGNSDSQYTLQGSKNHSNTITGAKQIPCSLKIRGIHAKEEKSLHGWGHGSNGAGYKSRSLARSCLSHFKSNQPYASRLGGPTCKVSRGVAYSTHRTNAPGKDFQGISAAFSTENGFHSVGHELADNHITSRDCNGHLLNCYGRNESIASTPPGEDRKSPRVLIKTLGKLDGCLRVEFHNGGNPSKVPAEDCSEPVQLLRYSPTLASETSPVPEARRGSSADSLPSHRPSPTDSRLRSSKGSSLSSESSWYDSPWGNAGELSEAEGSFLAPGMPDPSLHASFPPGDAKKPFNQSSSLSSLRELYKDANLGSLSPSGIRLSDEYMGTHASLSNRVSFASDIDVPSRVAHGDPIQYSSFTLPCRKPKAFVEDTAKKDSLKARMRRISDWTGSLSRKKRKLQEPRSKEGSDYFDSRSDGLNTDVQGSSQASAFLWSGGSTQILSQRSESTHAIGSDPLRQNIYENFMRELEMSRTNTENIETSTETAESSSESLSSLEQLDLLFEKEQGVVRKAGWLFFKPLVTVQKERKLELVARRKWKQYWVTLKGCTLLFYETYGKNSMDQSSAPRCALFAEDSIVQSVPEHPKKENVFCLSNSFGDVYLFQATSQTDLENWVTAVHSACASLFAKKHGKEDTLRLLKNQTKNLLQKIDMDSKMKKMAELQLSVVSDPKNRKAIENQIQQWEQNLEKFHMDLFRMRCYLASLQGGELPNPKSLLAAASRPSKLALGRLGILSVSSFHALVCSRDDSALRKRTLSLTQRGRNKKGIFSSLKGLDTLARKGKEKRPSITQVDELLHIYGSTVDGVPRDNAWEIQTYVHFQDNHGVTVGIKPEHRVEDILTLACKMRQLEPSHYGLQLRKLVDDNVEYCIPAPYEYMQQQVYDEIEVFPLNVYDVQLTKTGSVCDFGFAVTAQVDERQHLSRIFISDVLPDGLAYGEGLRKGNEIMTLNGEAVSDLDLKQMEALFSEKSVGLTLIARPPDTKATLCTSWSDSDLFSRDQKSLLPPPNQSQLLEEFLDNFKKNTANDFSNVPDITTGLKRSQTDGTLDQVSHREKMEQTFRSAEQITALCRSFNDSQANGMEGPRENQDPPPRSLARHLSDADRLRKVIQELVDTEKSYVKDLSCLFELYLEPLQNETFLTQDEMESLFGSLPEMLEFQKVFLETLEDGISASSDFNTLETPSQFRKLLFSLGGSFLYYADHFKLYSGFCANHIKVQKVLERAKTDKAFKAFLDARNPTKQHSSTLESYLIKPVQRVLKYPLLLKELVSLTDQESEEHYHLTEALKAMEKVASHINEMQKIYEDYGTVFDQLVAEQSGTEKEVTELSMGELLMHSTVSWLNPFLSLGKARKDLELTVFVFKRAVILVYKENCKLKKKLPSNSRPAHNSTDLDPFKFRWLIPISALQVRLGNPAGTENNSIWELIHTKSEIEGRPETIFQLCCSDSESKTNIVKVIRSILRENFRRHIKCELPLEKTCKDRLVPLKNRVPVSAKLASSRSLKVLKNSSSNEWTGETGKGTLLDSDEGSLSSGTQSSGCPTAEGRQDSKSTSPGKYPHPGLADFADNLIKESDILSDEDDDHRQTVKQGSPTKDIEIQFQRLRISEDPDVHPEAEQQPGPESGEGQKGGEQPKLVRGHFCPIKRKANSTKRDRGTLLKAQIRHQSLDSQSENATIDLNSVLEREFSVQSLTSVVSEECFYETESHGKS</sequence>
<comment type="function">
    <text evidence="1 9">Modulates the activity of RHO-like proteins and connects extracellular signals to cytoskeletal activities. Acts as a GDP-dissociation stimulator protein that stimulates the GDP-GTP exchange activity of RHO-like GTPases and activates them. Mediates extracellular laminin signals to activate Rac1, contributing to neurite growth. Involved in lamellipodial formation and advancement of the growth cone of embryonic hippocampal neurons. Promotes migration of neurons in the cerebral cortex. When overexpressed, induces membrane ruffling accompanied by the accumulation of actin filaments along the altered plasma membrane (By similarity). Activates specifically RAC1, but not CDC42 and RHOA.</text>
</comment>
<comment type="subunit">
    <text evidence="1">Interacts with MAP1A, MAP1B, PARP1 and YWHAE. Interacts with CD44, PARD3 and MAPK8IP2 (By similarity).</text>
</comment>
<comment type="subcellular location">
    <subcellularLocation>
        <location evidence="2">Cytoplasm</location>
    </subcellularLocation>
    <subcellularLocation>
        <location evidence="2">Cell projection</location>
        <location evidence="2">Lamellipodium</location>
    </subcellularLocation>
    <subcellularLocation>
        <location evidence="2">Cell projection</location>
        <location evidence="2">Filopodium</location>
    </subcellularLocation>
    <subcellularLocation>
        <location evidence="2">Cell projection</location>
        <location evidence="2">Growth cone</location>
    </subcellularLocation>
    <subcellularLocation>
        <location evidence="2">Cell projection</location>
        <location evidence="2">Neuron projection</location>
    </subcellularLocation>
    <subcellularLocation>
        <location evidence="2">Perikaryon</location>
    </subcellularLocation>
</comment>
<comment type="alternative products">
    <event type="alternative splicing"/>
    <isoform>
        <id>Q8IVF5-1</id>
        <name>1</name>
        <sequence type="displayed"/>
    </isoform>
    <isoform>
        <id>Q8IVF5-2</id>
        <name>2</name>
        <sequence type="described" ref="VSP_030975"/>
    </isoform>
    <isoform>
        <id>Q8IVF5-3</id>
        <name>3</name>
        <name>Short</name>
        <sequence type="described" ref="VSP_030971"/>
    </isoform>
    <isoform>
        <id>Q8IVF5-4</id>
        <name>4</name>
        <sequence type="described" ref="VSP_030972"/>
    </isoform>
    <isoform>
        <id>Q8IVF5-5</id>
        <name>5</name>
        <name>Long</name>
        <sequence type="described" ref="VSP_030974"/>
    </isoform>
</comment>
<comment type="tissue specificity">
    <text evidence="9">Expressed in the occipital, frontal and temporal lobes, cerebellum, putamen and testis.</text>
</comment>
<comment type="domain">
    <text evidence="1">The PH 1 domain and amino acids 621-782 (a region called TSS; otherwise known as CC-Ex) are necessary for membrane localization. The PH 1 and TSS domains are necessary for Rac1 activity. The PH 2 domain is engaged in the enhancement of the catalytic activity of the adjacent DH domain. The PH 1, TSS and DH domains are necessary to induce neurite-like structure (By similarity).</text>
</comment>
<comment type="PTM">
    <text evidence="1">Phosphorylated on serine and threonine residues. Phosphorylated on Thr-1648 by Rho-kinase. Its phosphorylation by Rho-kinase inhibits its guanine nucleotide exchange activity, its interaction with MAP1A, MAP1B, PARP1 and YWHAE and reduces its ability to promote neurite growth (By similarity).</text>
</comment>
<comment type="similarity">
    <text evidence="18">Belongs to the TIAM family.</text>
</comment>
<comment type="sequence caution" evidence="18">
    <conflict type="erroneous initiation">
        <sequence resource="EMBL-CDS" id="AAF05900"/>
    </conflict>
    <text>Truncated N-terminus.</text>
</comment>
<comment type="sequence caution" evidence="18">
    <conflict type="erroneous initiation">
        <sequence resource="EMBL-CDS" id="BAC23112"/>
    </conflict>
    <text>Extended N-terminus.</text>
</comment>
<comment type="sequence caution" evidence="18">
    <conflict type="erroneous initiation">
        <sequence resource="EMBL-CDS" id="BAC86170"/>
    </conflict>
    <text>Extended N-terminus.</text>
</comment>
<accession>Q8IVF5</accession>
<accession>B2RP56</accession>
<accession>C9JZV2</accession>
<accession>Q6NXN9</accession>
<accession>Q6ZUP9</accession>
<accession>Q9UFG6</accession>
<accession>Q9UKV9</accession>
<accession>Q9UKW0</accession>
<feature type="initiator methionine" description="Removed" evidence="3">
    <location>
        <position position="1"/>
    </location>
</feature>
<feature type="chain" id="PRO_0000317467" description="Rho guanine nucleotide exchange factor TIAM2">
    <location>
        <begin position="2"/>
        <end position="1701"/>
    </location>
</feature>
<feature type="domain" description="PH 1" evidence="6">
    <location>
        <begin position="506"/>
        <end position="620"/>
    </location>
</feature>
<feature type="domain" description="RBD" evidence="7">
    <location>
        <begin position="810"/>
        <end position="881"/>
    </location>
</feature>
<feature type="domain" description="PDZ" evidence="5">
    <location>
        <begin position="890"/>
        <end position="976"/>
    </location>
</feature>
<feature type="domain" description="DH" evidence="4">
    <location>
        <begin position="1099"/>
        <end position="1293"/>
    </location>
</feature>
<feature type="domain" description="PH 2" evidence="6">
    <location>
        <begin position="1347"/>
        <end position="1478"/>
    </location>
</feature>
<feature type="region of interest" description="Disordered" evidence="8">
    <location>
        <begin position="1"/>
        <end position="21"/>
    </location>
</feature>
<feature type="region of interest" description="Disordered" evidence="8">
    <location>
        <begin position="201"/>
        <end position="250"/>
    </location>
</feature>
<feature type="region of interest" description="Disordered" evidence="8">
    <location>
        <begin position="265"/>
        <end position="293"/>
    </location>
</feature>
<feature type="region of interest" description="Disordered" evidence="8">
    <location>
        <begin position="389"/>
        <end position="417"/>
    </location>
</feature>
<feature type="region of interest" description="Disordered" evidence="8">
    <location>
        <begin position="1070"/>
        <end position="1092"/>
    </location>
</feature>
<feature type="region of interest" description="Disordered" evidence="8">
    <location>
        <begin position="1500"/>
        <end position="1556"/>
    </location>
</feature>
<feature type="region of interest" description="Disordered" evidence="8">
    <location>
        <begin position="1568"/>
        <end position="1628"/>
    </location>
</feature>
<feature type="coiled-coil region" evidence="3">
    <location>
        <begin position="628"/>
        <end position="695"/>
    </location>
</feature>
<feature type="compositionally biased region" description="Low complexity" evidence="8">
    <location>
        <begin position="238"/>
        <end position="248"/>
    </location>
</feature>
<feature type="compositionally biased region" description="Basic and acidic residues" evidence="8">
    <location>
        <begin position="397"/>
        <end position="413"/>
    </location>
</feature>
<feature type="compositionally biased region" description="Low complexity" evidence="8">
    <location>
        <begin position="1513"/>
        <end position="1527"/>
    </location>
</feature>
<feature type="compositionally biased region" description="Basic and acidic residues" evidence="8">
    <location>
        <begin position="1596"/>
        <end position="1607"/>
    </location>
</feature>
<feature type="modified residue" description="Phosphoserine" evidence="2">
    <location>
        <position position="1583"/>
    </location>
</feature>
<feature type="modified residue" description="Phosphothreonine" evidence="2">
    <location>
        <position position="1648"/>
    </location>
</feature>
<feature type="lipid moiety-binding region" description="N-myristoyl glycine" evidence="3">
    <location>
        <position position="2"/>
    </location>
</feature>
<feature type="splice variant" id="VSP_030971" description="In isoform 3." evidence="14 16">
    <location>
        <begin position="1"/>
        <end position="1075"/>
    </location>
</feature>
<feature type="splice variant" id="VSP_030972" description="In isoform 4." evidence="17">
    <location>
        <begin position="1"/>
        <end position="688"/>
    </location>
</feature>
<feature type="splice variant" id="VSP_030974" description="In isoform 5." evidence="14">
    <original>Q</original>
    <variation>QIFDSSGSHGFSGTQLPQNSSNSSE</variation>
    <location>
        <position position="787"/>
    </location>
</feature>
<feature type="splice variant" id="VSP_030975" description="In isoform 2." evidence="15">
    <original>E</original>
    <variation>EQPEWSSEVMDVLDPRGKLTKGTLEEPRTL</variation>
    <location>
        <position position="1317"/>
    </location>
</feature>
<feature type="sequence variant" id="VAR_051994" description="In dbSNP:rs931312.">
    <original>R</original>
    <variation>H</variation>
    <location>
        <position position="332"/>
    </location>
</feature>
<feature type="sequence variant" id="VAR_051995" description="In dbSNP:rs7770537.">
    <original>R</original>
    <variation>H</variation>
    <location>
        <position position="913"/>
    </location>
</feature>
<feature type="sequence variant" id="VAR_051996" description="In dbSNP:rs4259257." evidence="9 10 11 12 13">
    <original>S</original>
    <variation>P</variation>
    <location>
        <position position="1089"/>
    </location>
</feature>
<feature type="sequence variant" id="VAR_038534" description="In dbSNP:rs11751128.">
    <original>R</original>
    <variation>C</variation>
    <location>
        <position position="1101"/>
    </location>
</feature>
<feature type="sequence variant" id="VAR_038535" description="In dbSNP:rs1571767.">
    <original>D</original>
    <variation>E</variation>
    <location>
        <position position="1572"/>
    </location>
</feature>
<feature type="sequence conflict" description="In Ref. 7; BAC86170." evidence="18" ref="7">
    <original>V</original>
    <variation>A</variation>
    <location>
        <position position="506"/>
    </location>
</feature>
<feature type="sequence conflict" description="In Ref. 1; AAF05900." evidence="18" ref="1">
    <original>L</original>
    <variation>P</variation>
    <location>
        <position position="633"/>
    </location>
</feature>
<feature type="sequence conflict" description="In Ref. 1; AAF05900." evidence="18" ref="1">
    <original>L</original>
    <variation>P</variation>
    <location>
        <position position="722"/>
    </location>
</feature>
<feature type="sequence conflict" description="In Ref. 1; AAF05900." evidence="18" ref="1">
    <original>A</original>
    <variation>T</variation>
    <location>
        <position position="807"/>
    </location>
</feature>
<feature type="sequence conflict" description="In Ref. 7; BAC86170." evidence="18" ref="7">
    <original>R</original>
    <variation>K</variation>
    <location>
        <position position="1066"/>
    </location>
</feature>
<feature type="sequence conflict" description="In Ref. 6; AAH66979." evidence="18" ref="6">
    <original>R</original>
    <variation>G</variation>
    <location>
        <position position="1092"/>
    </location>
</feature>
<feature type="sequence conflict" description="In Ref. 6; AAH66979." evidence="18" ref="6">
    <original>Q</original>
    <variation>R</variation>
    <location>
        <position position="1154"/>
    </location>
</feature>
<feature type="sequence conflict" description="In Ref. 7; BAC86170." evidence="18" ref="7">
    <original>S</original>
    <variation>P</variation>
    <location>
        <position position="1186"/>
    </location>
</feature>
<feature type="sequence conflict" description="In Ref. 7; BAC86170." evidence="18" ref="7">
    <original>Q</original>
    <variation>R</variation>
    <location>
        <position position="1306"/>
    </location>
</feature>
<feature type="sequence conflict" description="In Ref. 7; BAC86170." evidence="18" ref="7">
    <original>E</original>
    <variation>K</variation>
    <location>
        <position position="1365"/>
    </location>
</feature>
<feature type="sequence conflict" description="In Ref. 6; AAH66979." evidence="18" ref="6">
    <original>N</original>
    <variation>Y</variation>
    <location>
        <position position="1376"/>
    </location>
</feature>
<feature type="sequence conflict" description="In Ref. 6; AAH66979." evidence="18" ref="6">
    <original>R</original>
    <variation>S</variation>
    <location>
        <position position="1451"/>
    </location>
</feature>
<feature type="sequence conflict" description="In Ref. 6; AAH66979." evidence="18" ref="6">
    <original>R</original>
    <variation>G</variation>
    <location>
        <position position="1482"/>
    </location>
</feature>
<feature type="sequence conflict" description="In Ref. 7; BAC86170." evidence="18" ref="7">
    <original>D</original>
    <variation>Y</variation>
    <location>
        <position position="1519"/>
    </location>
</feature>
<feature type="sequence conflict" description="In Ref. 7; BAC86170." evidence="18" ref="7">
    <original>A</original>
    <variation>T</variation>
    <location>
        <position position="1639"/>
    </location>
</feature>
<keyword id="KW-0025">Alternative splicing</keyword>
<keyword id="KW-0966">Cell projection</keyword>
<keyword id="KW-0175">Coiled coil</keyword>
<keyword id="KW-0963">Cytoplasm</keyword>
<keyword id="KW-0344">Guanine-nucleotide releasing factor</keyword>
<keyword id="KW-0449">Lipoprotein</keyword>
<keyword id="KW-0519">Myristate</keyword>
<keyword id="KW-0597">Phosphoprotein</keyword>
<keyword id="KW-1267">Proteomics identification</keyword>
<keyword id="KW-1185">Reference proteome</keyword>
<keyword id="KW-0677">Repeat</keyword>
<organism>
    <name type="scientific">Homo sapiens</name>
    <name type="common">Human</name>
    <dbReference type="NCBI Taxonomy" id="9606"/>
    <lineage>
        <taxon>Eukaryota</taxon>
        <taxon>Metazoa</taxon>
        <taxon>Chordata</taxon>
        <taxon>Craniata</taxon>
        <taxon>Vertebrata</taxon>
        <taxon>Euteleostomi</taxon>
        <taxon>Mammalia</taxon>
        <taxon>Eutheria</taxon>
        <taxon>Euarchontoglires</taxon>
        <taxon>Primates</taxon>
        <taxon>Haplorrhini</taxon>
        <taxon>Catarrhini</taxon>
        <taxon>Hominidae</taxon>
        <taxon>Homo</taxon>
    </lineage>
</organism>
<reference key="1">
    <citation type="journal article" date="1999" name="Genomics">
        <title>Cloning and characterization of T-cell lymphoma invasion and metastasis 2 (TIAM2), a novel guanine nucleotide exchange factor related to TIAM1.</title>
        <authorList>
            <person name="Chiu C.-Y."/>
            <person name="Leng S."/>
            <person name="Martin K.A."/>
            <person name="Kim E."/>
            <person name="Gorman S."/>
            <person name="Duhl D.M."/>
        </authorList>
    </citation>
    <scope>NUCLEOTIDE SEQUENCE [MRNA] (ISOFORM 3)</scope>
    <scope>NUCLEOTIDE SEQUENCE [MRNA] OF 634-1701 (ISOFORM 5)</scope>
    <scope>FUNCTION</scope>
    <scope>TISSUE SPECIFICITY</scope>
    <scope>VARIANT PRO-1089</scope>
</reference>
<reference key="2">
    <citation type="submission" date="2002-11" db="EMBL/GenBank/DDBJ databases">
        <title>The nucleotide sequence of a long cDNA clone isolated from human.</title>
        <authorList>
            <person name="Nagase T."/>
            <person name="Kikuno R."/>
            <person name="Ohara O."/>
        </authorList>
    </citation>
    <scope>NUCLEOTIDE SEQUENCE [LARGE SCALE MRNA] (ISOFORM 1)</scope>
    <scope>VARIANT PRO-1089</scope>
    <source>
        <tissue>Brain</tissue>
    </source>
</reference>
<reference key="3">
    <citation type="journal article" date="2007" name="BMC Genomics">
        <title>The full-ORF clone resource of the German cDNA consortium.</title>
        <authorList>
            <person name="Bechtel S."/>
            <person name="Rosenfelder H."/>
            <person name="Duda A."/>
            <person name="Schmidt C.P."/>
            <person name="Ernst U."/>
            <person name="Wellenreuther R."/>
            <person name="Mehrle A."/>
            <person name="Schuster C."/>
            <person name="Bahr A."/>
            <person name="Bloecker H."/>
            <person name="Heubner D."/>
            <person name="Hoerlein A."/>
            <person name="Michel G."/>
            <person name="Wedler H."/>
            <person name="Koehrer K."/>
            <person name="Ottenwaelder B."/>
            <person name="Poustka A."/>
            <person name="Wiemann S."/>
            <person name="Schupp I."/>
        </authorList>
    </citation>
    <scope>NUCLEOTIDE SEQUENCE [LARGE SCALE MRNA] (ISOFORM 4)</scope>
    <scope>VARIANT PRO-1089</scope>
    <source>
        <tissue>Testis</tissue>
    </source>
</reference>
<reference key="4">
    <citation type="journal article" date="2003" name="Nature">
        <title>The DNA sequence and analysis of human chromosome 6.</title>
        <authorList>
            <person name="Mungall A.J."/>
            <person name="Palmer S.A."/>
            <person name="Sims S.K."/>
            <person name="Edwards C.A."/>
            <person name="Ashurst J.L."/>
            <person name="Wilming L."/>
            <person name="Jones M.C."/>
            <person name="Horton R."/>
            <person name="Hunt S.E."/>
            <person name="Scott C.E."/>
            <person name="Gilbert J.G.R."/>
            <person name="Clamp M.E."/>
            <person name="Bethel G."/>
            <person name="Milne S."/>
            <person name="Ainscough R."/>
            <person name="Almeida J.P."/>
            <person name="Ambrose K.D."/>
            <person name="Andrews T.D."/>
            <person name="Ashwell R.I.S."/>
            <person name="Babbage A.K."/>
            <person name="Bagguley C.L."/>
            <person name="Bailey J."/>
            <person name="Banerjee R."/>
            <person name="Barker D.J."/>
            <person name="Barlow K.F."/>
            <person name="Bates K."/>
            <person name="Beare D.M."/>
            <person name="Beasley H."/>
            <person name="Beasley O."/>
            <person name="Bird C.P."/>
            <person name="Blakey S.E."/>
            <person name="Bray-Allen S."/>
            <person name="Brook J."/>
            <person name="Brown A.J."/>
            <person name="Brown J.Y."/>
            <person name="Burford D.C."/>
            <person name="Burrill W."/>
            <person name="Burton J."/>
            <person name="Carder C."/>
            <person name="Carter N.P."/>
            <person name="Chapman J.C."/>
            <person name="Clark S.Y."/>
            <person name="Clark G."/>
            <person name="Clee C.M."/>
            <person name="Clegg S."/>
            <person name="Cobley V."/>
            <person name="Collier R.E."/>
            <person name="Collins J.E."/>
            <person name="Colman L.K."/>
            <person name="Corby N.R."/>
            <person name="Coville G.J."/>
            <person name="Culley K.M."/>
            <person name="Dhami P."/>
            <person name="Davies J."/>
            <person name="Dunn M."/>
            <person name="Earthrowl M.E."/>
            <person name="Ellington A.E."/>
            <person name="Evans K.A."/>
            <person name="Faulkner L."/>
            <person name="Francis M.D."/>
            <person name="Frankish A."/>
            <person name="Frankland J."/>
            <person name="French L."/>
            <person name="Garner P."/>
            <person name="Garnett J."/>
            <person name="Ghori M.J."/>
            <person name="Gilby L.M."/>
            <person name="Gillson C.J."/>
            <person name="Glithero R.J."/>
            <person name="Grafham D.V."/>
            <person name="Grant M."/>
            <person name="Gribble S."/>
            <person name="Griffiths C."/>
            <person name="Griffiths M.N.D."/>
            <person name="Hall R."/>
            <person name="Halls K.S."/>
            <person name="Hammond S."/>
            <person name="Harley J.L."/>
            <person name="Hart E.A."/>
            <person name="Heath P.D."/>
            <person name="Heathcott R."/>
            <person name="Holmes S.J."/>
            <person name="Howden P.J."/>
            <person name="Howe K.L."/>
            <person name="Howell G.R."/>
            <person name="Huckle E."/>
            <person name="Humphray S.J."/>
            <person name="Humphries M.D."/>
            <person name="Hunt A.R."/>
            <person name="Johnson C.M."/>
            <person name="Joy A.A."/>
            <person name="Kay M."/>
            <person name="Keenan S.J."/>
            <person name="Kimberley A.M."/>
            <person name="King A."/>
            <person name="Laird G.K."/>
            <person name="Langford C."/>
            <person name="Lawlor S."/>
            <person name="Leongamornlert D.A."/>
            <person name="Leversha M."/>
            <person name="Lloyd C.R."/>
            <person name="Lloyd D.M."/>
            <person name="Loveland J.E."/>
            <person name="Lovell J."/>
            <person name="Martin S."/>
            <person name="Mashreghi-Mohammadi M."/>
            <person name="Maslen G.L."/>
            <person name="Matthews L."/>
            <person name="McCann O.T."/>
            <person name="McLaren S.J."/>
            <person name="McLay K."/>
            <person name="McMurray A."/>
            <person name="Moore M.J.F."/>
            <person name="Mullikin J.C."/>
            <person name="Niblett D."/>
            <person name="Nickerson T."/>
            <person name="Novik K.L."/>
            <person name="Oliver K."/>
            <person name="Overton-Larty E.K."/>
            <person name="Parker A."/>
            <person name="Patel R."/>
            <person name="Pearce A.V."/>
            <person name="Peck A.I."/>
            <person name="Phillimore B.J.C.T."/>
            <person name="Phillips S."/>
            <person name="Plumb R.W."/>
            <person name="Porter K.M."/>
            <person name="Ramsey Y."/>
            <person name="Ranby S.A."/>
            <person name="Rice C.M."/>
            <person name="Ross M.T."/>
            <person name="Searle S.M."/>
            <person name="Sehra H.K."/>
            <person name="Sheridan E."/>
            <person name="Skuce C.D."/>
            <person name="Smith S."/>
            <person name="Smith M."/>
            <person name="Spraggon L."/>
            <person name="Squares S.L."/>
            <person name="Steward C.A."/>
            <person name="Sycamore N."/>
            <person name="Tamlyn-Hall G."/>
            <person name="Tester J."/>
            <person name="Theaker A.J."/>
            <person name="Thomas D.W."/>
            <person name="Thorpe A."/>
            <person name="Tracey A."/>
            <person name="Tromans A."/>
            <person name="Tubby B."/>
            <person name="Wall M."/>
            <person name="Wallis J.M."/>
            <person name="West A.P."/>
            <person name="White S.S."/>
            <person name="Whitehead S.L."/>
            <person name="Whittaker H."/>
            <person name="Wild A."/>
            <person name="Willey D.J."/>
            <person name="Wilmer T.E."/>
            <person name="Wood J.M."/>
            <person name="Wray P.W."/>
            <person name="Wyatt J.C."/>
            <person name="Young L."/>
            <person name="Younger R.M."/>
            <person name="Bentley D.R."/>
            <person name="Coulson A."/>
            <person name="Durbin R.M."/>
            <person name="Hubbard T."/>
            <person name="Sulston J.E."/>
            <person name="Dunham I."/>
            <person name="Rogers J."/>
            <person name="Beck S."/>
        </authorList>
    </citation>
    <scope>NUCLEOTIDE SEQUENCE [LARGE SCALE GENOMIC DNA]</scope>
</reference>
<reference key="5">
    <citation type="submission" date="2005-09" db="EMBL/GenBank/DDBJ databases">
        <authorList>
            <person name="Mural R.J."/>
            <person name="Istrail S."/>
            <person name="Sutton G.G."/>
            <person name="Florea L."/>
            <person name="Halpern A.L."/>
            <person name="Mobarry C.M."/>
            <person name="Lippert R."/>
            <person name="Walenz B."/>
            <person name="Shatkay H."/>
            <person name="Dew I."/>
            <person name="Miller J.R."/>
            <person name="Flanigan M.J."/>
            <person name="Edwards N.J."/>
            <person name="Bolanos R."/>
            <person name="Fasulo D."/>
            <person name="Halldorsson B.V."/>
            <person name="Hannenhalli S."/>
            <person name="Turner R."/>
            <person name="Yooseph S."/>
            <person name="Lu F."/>
            <person name="Nusskern D.R."/>
            <person name="Shue B.C."/>
            <person name="Zheng X.H."/>
            <person name="Zhong F."/>
            <person name="Delcher A.L."/>
            <person name="Huson D.H."/>
            <person name="Kravitz S.A."/>
            <person name="Mouchard L."/>
            <person name="Reinert K."/>
            <person name="Remington K.A."/>
            <person name="Clark A.G."/>
            <person name="Waterman M.S."/>
            <person name="Eichler E.E."/>
            <person name="Adams M.D."/>
            <person name="Hunkapiller M.W."/>
            <person name="Myers E.W."/>
            <person name="Venter J.C."/>
        </authorList>
    </citation>
    <scope>NUCLEOTIDE SEQUENCE [LARGE SCALE GENOMIC DNA]</scope>
</reference>
<reference key="6">
    <citation type="journal article" date="2004" name="Genome Res.">
        <title>The status, quality, and expansion of the NIH full-length cDNA project: the Mammalian Gene Collection (MGC).</title>
        <authorList>
            <consortium name="The MGC Project Team"/>
        </authorList>
    </citation>
    <scope>NUCLEOTIDE SEQUENCE [LARGE SCALE MRNA] (ISOFORMS 1 AND 3)</scope>
    <scope>VARIANT PRO-1089</scope>
    <source>
        <tissue>Brain</tissue>
    </source>
</reference>
<reference key="7">
    <citation type="journal article" date="2004" name="Nat. Genet.">
        <title>Complete sequencing and characterization of 21,243 full-length human cDNAs.</title>
        <authorList>
            <person name="Ota T."/>
            <person name="Suzuki Y."/>
            <person name="Nishikawa T."/>
            <person name="Otsuki T."/>
            <person name="Sugiyama T."/>
            <person name="Irie R."/>
            <person name="Wakamatsu A."/>
            <person name="Hayashi K."/>
            <person name="Sato H."/>
            <person name="Nagai K."/>
            <person name="Kimura K."/>
            <person name="Makita H."/>
            <person name="Sekine M."/>
            <person name="Obayashi M."/>
            <person name="Nishi T."/>
            <person name="Shibahara T."/>
            <person name="Tanaka T."/>
            <person name="Ishii S."/>
            <person name="Yamamoto J."/>
            <person name="Saito K."/>
            <person name="Kawai Y."/>
            <person name="Isono Y."/>
            <person name="Nakamura Y."/>
            <person name="Nagahari K."/>
            <person name="Murakami K."/>
            <person name="Yasuda T."/>
            <person name="Iwayanagi T."/>
            <person name="Wagatsuma M."/>
            <person name="Shiratori A."/>
            <person name="Sudo H."/>
            <person name="Hosoiri T."/>
            <person name="Kaku Y."/>
            <person name="Kodaira H."/>
            <person name="Kondo H."/>
            <person name="Sugawara M."/>
            <person name="Takahashi M."/>
            <person name="Kanda K."/>
            <person name="Yokoi T."/>
            <person name="Furuya T."/>
            <person name="Kikkawa E."/>
            <person name="Omura Y."/>
            <person name="Abe K."/>
            <person name="Kamihara K."/>
            <person name="Katsuta N."/>
            <person name="Sato K."/>
            <person name="Tanikawa M."/>
            <person name="Yamazaki M."/>
            <person name="Ninomiya K."/>
            <person name="Ishibashi T."/>
            <person name="Yamashita H."/>
            <person name="Murakawa K."/>
            <person name="Fujimori K."/>
            <person name="Tanai H."/>
            <person name="Kimata M."/>
            <person name="Watanabe M."/>
            <person name="Hiraoka S."/>
            <person name="Chiba Y."/>
            <person name="Ishida S."/>
            <person name="Ono Y."/>
            <person name="Takiguchi S."/>
            <person name="Watanabe S."/>
            <person name="Yosida M."/>
            <person name="Hotuta T."/>
            <person name="Kusano J."/>
            <person name="Kanehori K."/>
            <person name="Takahashi-Fujii A."/>
            <person name="Hara H."/>
            <person name="Tanase T.-O."/>
            <person name="Nomura Y."/>
            <person name="Togiya S."/>
            <person name="Komai F."/>
            <person name="Hara R."/>
            <person name="Takeuchi K."/>
            <person name="Arita M."/>
            <person name="Imose N."/>
            <person name="Musashino K."/>
            <person name="Yuuki H."/>
            <person name="Oshima A."/>
            <person name="Sasaki N."/>
            <person name="Aotsuka S."/>
            <person name="Yoshikawa Y."/>
            <person name="Matsunawa H."/>
            <person name="Ichihara T."/>
            <person name="Shiohata N."/>
            <person name="Sano S."/>
            <person name="Moriya S."/>
            <person name="Momiyama H."/>
            <person name="Satoh N."/>
            <person name="Takami S."/>
            <person name="Terashima Y."/>
            <person name="Suzuki O."/>
            <person name="Nakagawa S."/>
            <person name="Senoh A."/>
            <person name="Mizoguchi H."/>
            <person name="Goto Y."/>
            <person name="Shimizu F."/>
            <person name="Wakebe H."/>
            <person name="Hishigaki H."/>
            <person name="Watanabe T."/>
            <person name="Sugiyama A."/>
            <person name="Takemoto M."/>
            <person name="Kawakami B."/>
            <person name="Yamazaki M."/>
            <person name="Watanabe K."/>
            <person name="Kumagai A."/>
            <person name="Itakura S."/>
            <person name="Fukuzumi Y."/>
            <person name="Fujimori Y."/>
            <person name="Komiyama M."/>
            <person name="Tashiro H."/>
            <person name="Tanigami A."/>
            <person name="Fujiwara T."/>
            <person name="Ono T."/>
            <person name="Yamada K."/>
            <person name="Fujii Y."/>
            <person name="Ozaki K."/>
            <person name="Hirao M."/>
            <person name="Ohmori Y."/>
            <person name="Kawabata A."/>
            <person name="Hikiji T."/>
            <person name="Kobatake N."/>
            <person name="Inagaki H."/>
            <person name="Ikema Y."/>
            <person name="Okamoto S."/>
            <person name="Okitani R."/>
            <person name="Kawakami T."/>
            <person name="Noguchi S."/>
            <person name="Itoh T."/>
            <person name="Shigeta K."/>
            <person name="Senba T."/>
            <person name="Matsumura K."/>
            <person name="Nakajima Y."/>
            <person name="Mizuno T."/>
            <person name="Morinaga M."/>
            <person name="Sasaki M."/>
            <person name="Togashi T."/>
            <person name="Oyama M."/>
            <person name="Hata H."/>
            <person name="Watanabe M."/>
            <person name="Komatsu T."/>
            <person name="Mizushima-Sugano J."/>
            <person name="Satoh T."/>
            <person name="Shirai Y."/>
            <person name="Takahashi Y."/>
            <person name="Nakagawa K."/>
            <person name="Okumura K."/>
            <person name="Nagase T."/>
            <person name="Nomura N."/>
            <person name="Kikuchi H."/>
            <person name="Masuho Y."/>
            <person name="Yamashita R."/>
            <person name="Nakai K."/>
            <person name="Yada T."/>
            <person name="Nakamura Y."/>
            <person name="Ohara O."/>
            <person name="Isogai T."/>
            <person name="Sugano S."/>
        </authorList>
    </citation>
    <scope>NUCLEOTIDE SEQUENCE [LARGE SCALE MRNA] OF 446-1701 (ISOFORM 2)</scope>
    <scope>VARIANT PRO-1089</scope>
    <source>
        <tissue>Fetal brain</tissue>
    </source>
</reference>
<evidence type="ECO:0000250" key="1"/>
<evidence type="ECO:0000250" key="2">
    <source>
        <dbReference type="UniProtKB" id="Q6ZPF3"/>
    </source>
</evidence>
<evidence type="ECO:0000255" key="3"/>
<evidence type="ECO:0000255" key="4">
    <source>
        <dbReference type="PROSITE-ProRule" id="PRU00062"/>
    </source>
</evidence>
<evidence type="ECO:0000255" key="5">
    <source>
        <dbReference type="PROSITE-ProRule" id="PRU00143"/>
    </source>
</evidence>
<evidence type="ECO:0000255" key="6">
    <source>
        <dbReference type="PROSITE-ProRule" id="PRU00145"/>
    </source>
</evidence>
<evidence type="ECO:0000255" key="7">
    <source>
        <dbReference type="PROSITE-ProRule" id="PRU00262"/>
    </source>
</evidence>
<evidence type="ECO:0000256" key="8">
    <source>
        <dbReference type="SAM" id="MobiDB-lite"/>
    </source>
</evidence>
<evidence type="ECO:0000269" key="9">
    <source>
    </source>
</evidence>
<evidence type="ECO:0000269" key="10">
    <source>
    </source>
</evidence>
<evidence type="ECO:0000269" key="11">
    <source>
    </source>
</evidence>
<evidence type="ECO:0000269" key="12">
    <source>
    </source>
</evidence>
<evidence type="ECO:0000269" key="13">
    <source ref="2"/>
</evidence>
<evidence type="ECO:0000303" key="14">
    <source>
    </source>
</evidence>
<evidence type="ECO:0000303" key="15">
    <source>
    </source>
</evidence>
<evidence type="ECO:0000303" key="16">
    <source>
    </source>
</evidence>
<evidence type="ECO:0000303" key="17">
    <source>
    </source>
</evidence>
<evidence type="ECO:0000305" key="18"/>
<evidence type="ECO:0000305" key="19">
    <source>
    </source>
</evidence>